<dbReference type="EMBL" id="AE014299">
    <property type="protein sequence ID" value="AAN56368.1"/>
    <property type="molecule type" value="Genomic_DNA"/>
</dbReference>
<dbReference type="RefSeq" id="NP_718924.1">
    <property type="nucleotide sequence ID" value="NC_004347.2"/>
</dbReference>
<dbReference type="RefSeq" id="WP_011073238.1">
    <property type="nucleotide sequence ID" value="NC_004347.2"/>
</dbReference>
<dbReference type="SMR" id="Q8EBX5"/>
<dbReference type="STRING" id="211586.SO_3370"/>
<dbReference type="PaxDb" id="211586-SO_3370"/>
<dbReference type="KEGG" id="son:SO_3370"/>
<dbReference type="PATRIC" id="fig|211586.12.peg.3270"/>
<dbReference type="eggNOG" id="COG2353">
    <property type="taxonomic scope" value="Bacteria"/>
</dbReference>
<dbReference type="HOGENOM" id="CLU_071003_1_2_6"/>
<dbReference type="OrthoDB" id="9811006at2"/>
<dbReference type="PhylomeDB" id="Q8EBX5"/>
<dbReference type="BioCyc" id="SONE211586:G1GMP-3136-MONOMER"/>
<dbReference type="Proteomes" id="UP000008186">
    <property type="component" value="Chromosome"/>
</dbReference>
<dbReference type="GO" id="GO:0005615">
    <property type="term" value="C:extracellular space"/>
    <property type="evidence" value="ECO:0000318"/>
    <property type="project" value="GO_Central"/>
</dbReference>
<dbReference type="GO" id="GO:0042597">
    <property type="term" value="C:periplasmic space"/>
    <property type="evidence" value="ECO:0007669"/>
    <property type="project" value="UniProtKB-SubCell"/>
</dbReference>
<dbReference type="Gene3D" id="2.40.128.110">
    <property type="entry name" value="Lipid/polyisoprenoid-binding, YceI-like"/>
    <property type="match status" value="1"/>
</dbReference>
<dbReference type="HAMAP" id="MF_00780">
    <property type="entry name" value="UPF0312"/>
    <property type="match status" value="1"/>
</dbReference>
<dbReference type="InterPro" id="IPR007372">
    <property type="entry name" value="Lipid/polyisoprenoid-bd_YceI"/>
</dbReference>
<dbReference type="InterPro" id="IPR036761">
    <property type="entry name" value="TTHA0802/YceI-like_sf"/>
</dbReference>
<dbReference type="InterPro" id="IPR023480">
    <property type="entry name" value="UPF0312/YceI"/>
</dbReference>
<dbReference type="NCBIfam" id="NF002994">
    <property type="entry name" value="PRK03757.1"/>
    <property type="match status" value="1"/>
</dbReference>
<dbReference type="PANTHER" id="PTHR34406">
    <property type="entry name" value="PROTEIN YCEI"/>
    <property type="match status" value="1"/>
</dbReference>
<dbReference type="PANTHER" id="PTHR34406:SF1">
    <property type="entry name" value="PROTEIN YCEI"/>
    <property type="match status" value="1"/>
</dbReference>
<dbReference type="Pfam" id="PF04264">
    <property type="entry name" value="YceI"/>
    <property type="match status" value="1"/>
</dbReference>
<dbReference type="SMART" id="SM00867">
    <property type="entry name" value="YceI"/>
    <property type="match status" value="1"/>
</dbReference>
<dbReference type="SUPFAM" id="SSF101874">
    <property type="entry name" value="YceI-like"/>
    <property type="match status" value="1"/>
</dbReference>
<keyword id="KW-0574">Periplasm</keyword>
<keyword id="KW-1185">Reference proteome</keyword>
<keyword id="KW-0732">Signal</keyword>
<sequence length="191" mass="20377">MKKQLFSALIGASLFAPMAVSAADYVIDTEGAHASITFKVNHLGYSYVVGRFNDFSGDFSFDAAKPTAMKVNVTVNTVSVDSNHAERDKHIRGEDFLNTGKFAKATFASTSVEDKGNGDLVINGNLTLNGVTKPLAIQAHAVGEGQDPWGGYRAGFTGKTTFAMKDFGIKIDLGPTSSHVELDLVVEGVRK</sequence>
<name>Y3370_SHEON</name>
<accession>Q8EBX5</accession>
<organism>
    <name type="scientific">Shewanella oneidensis (strain ATCC 700550 / JCM 31522 / CIP 106686 / LMG 19005 / NCIMB 14063 / MR-1)</name>
    <dbReference type="NCBI Taxonomy" id="211586"/>
    <lineage>
        <taxon>Bacteria</taxon>
        <taxon>Pseudomonadati</taxon>
        <taxon>Pseudomonadota</taxon>
        <taxon>Gammaproteobacteria</taxon>
        <taxon>Alteromonadales</taxon>
        <taxon>Shewanellaceae</taxon>
        <taxon>Shewanella</taxon>
    </lineage>
</organism>
<proteinExistence type="inferred from homology"/>
<evidence type="ECO:0000255" key="1">
    <source>
        <dbReference type="HAMAP-Rule" id="MF_00780"/>
    </source>
</evidence>
<protein>
    <recommendedName>
        <fullName evidence="1">UPF0312 protein SO_3370</fullName>
    </recommendedName>
</protein>
<feature type="signal peptide" evidence="1">
    <location>
        <begin position="1"/>
        <end position="22"/>
    </location>
</feature>
<feature type="chain" id="PRO_0000036285" description="UPF0312 protein SO_3370">
    <location>
        <begin position="23"/>
        <end position="191"/>
    </location>
</feature>
<gene>
    <name type="ordered locus">SO_3370</name>
</gene>
<comment type="subcellular location">
    <subcellularLocation>
        <location evidence="1">Periplasm</location>
    </subcellularLocation>
</comment>
<comment type="similarity">
    <text evidence="1">Belongs to the UPF0312 family. Type 1 subfamily.</text>
</comment>
<reference key="1">
    <citation type="journal article" date="2002" name="Nat. Biotechnol.">
        <title>Genome sequence of the dissimilatory metal ion-reducing bacterium Shewanella oneidensis.</title>
        <authorList>
            <person name="Heidelberg J.F."/>
            <person name="Paulsen I.T."/>
            <person name="Nelson K.E."/>
            <person name="Gaidos E.J."/>
            <person name="Nelson W.C."/>
            <person name="Read T.D."/>
            <person name="Eisen J.A."/>
            <person name="Seshadri R."/>
            <person name="Ward N.L."/>
            <person name="Methe B.A."/>
            <person name="Clayton R.A."/>
            <person name="Meyer T."/>
            <person name="Tsapin A."/>
            <person name="Scott J."/>
            <person name="Beanan M.J."/>
            <person name="Brinkac L.M."/>
            <person name="Daugherty S.C."/>
            <person name="DeBoy R.T."/>
            <person name="Dodson R.J."/>
            <person name="Durkin A.S."/>
            <person name="Haft D.H."/>
            <person name="Kolonay J.F."/>
            <person name="Madupu R."/>
            <person name="Peterson J.D."/>
            <person name="Umayam L.A."/>
            <person name="White O."/>
            <person name="Wolf A.M."/>
            <person name="Vamathevan J.J."/>
            <person name="Weidman J.F."/>
            <person name="Impraim M."/>
            <person name="Lee K."/>
            <person name="Berry K.J."/>
            <person name="Lee C."/>
            <person name="Mueller J."/>
            <person name="Khouri H.M."/>
            <person name="Gill J."/>
            <person name="Utterback T.R."/>
            <person name="McDonald L.A."/>
            <person name="Feldblyum T.V."/>
            <person name="Smith H.O."/>
            <person name="Venter J.C."/>
            <person name="Nealson K.H."/>
            <person name="Fraser C.M."/>
        </authorList>
    </citation>
    <scope>NUCLEOTIDE SEQUENCE [LARGE SCALE GENOMIC DNA]</scope>
    <source>
        <strain>ATCC 700550 / JCM 31522 / CIP 106686 / LMG 19005 / NCIMB 14063 / MR-1</strain>
    </source>
</reference>